<reference key="1">
    <citation type="journal article" date="1989" name="Virus Res.">
        <title>Sequence analysis of nucleocapsid gene and leader RNA of human coronavirus OC43.</title>
        <authorList>
            <person name="Kamahora T."/>
            <person name="Soe L.H."/>
            <person name="Lai M.M.C."/>
        </authorList>
    </citation>
    <scope>NUCLEOTIDE SEQUENCE</scope>
</reference>
<reference key="2">
    <citation type="journal article" date="2004" name="J. Virol.">
        <title>Human respiratory coronavirus OC43: genetic stability and neuroinvasion.</title>
        <authorList>
            <person name="St Jean J.R."/>
            <person name="Jacomy H."/>
            <person name="Desforges M."/>
            <person name="Vabret A."/>
            <person name="Freymuth F."/>
            <person name="Talbot P.J."/>
        </authorList>
    </citation>
    <scope>NUCLEOTIDE SEQUENCE [GENOMIC RNA]</scope>
    <source>
        <strain>Isolate ATCC VR-759</strain>
        <strain>Isolate clinical OC43-Paris</strain>
    </source>
</reference>
<reference key="3">
    <citation type="journal article" date="2005" name="J. Virol.">
        <title>Complete genomic sequence of human coronavirus OC43: molecular clock analysis suggests a relatively recent zoonotic coronavirus transmission event.</title>
        <authorList>
            <person name="Vijgen L."/>
            <person name="Keyaerts E."/>
            <person name="Moes E."/>
            <person name="Thoelen I."/>
            <person name="Wollants E."/>
            <person name="Lemey P."/>
            <person name="Vandamme A.M."/>
            <person name="Van Ranst M."/>
        </authorList>
    </citation>
    <scope>NUCLEOTIDE SEQUENCE [GENOMIC RNA]</scope>
    <source>
        <strain>Isolate ATCC VR-759</strain>
    </source>
</reference>
<reference key="4">
    <citation type="journal article" date="2022" name="Nature">
        <title>Coronaviruses exploit a host cysteine-aspartic protease for replication.</title>
        <authorList>
            <person name="Chu H."/>
            <person name="Hou Y."/>
            <person name="Yang D."/>
            <person name="Wen L."/>
            <person name="Shuai H."/>
            <person name="Yoon C."/>
            <person name="Shi J."/>
            <person name="Chai Y."/>
            <person name="Yuen T.T."/>
            <person name="Hu B."/>
            <person name="Li C."/>
            <person name="Zhao X."/>
            <person name="Wang Y."/>
            <person name="Huang X."/>
            <person name="Lee K.S."/>
            <person name="Luo C."/>
            <person name="Cai J.P."/>
            <person name="Poon V.K."/>
            <person name="Chan C.C."/>
            <person name="Zhang A.J."/>
            <person name="Yuan S."/>
            <person name="Sit K.Y."/>
            <person name="Foo D.C."/>
            <person name="Au W.K."/>
            <person name="Wong K.K."/>
            <person name="Zhou J."/>
            <person name="Kok K.H."/>
            <person name="Jin D.Y."/>
            <person name="Chan J.F."/>
            <person name="Yuen K.Y."/>
        </authorList>
    </citation>
    <scope>CLEAVAGE</scope>
</reference>
<reference key="5">
    <citation type="journal article" date="2022" name="PLoS Pathog.">
        <title>Nsp1 proteins of human coronaviruses HCoV-OC43 and SARS-CoV2 inhibit stress granule formation.</title>
        <authorList>
            <person name="Dolliver S.M."/>
            <person name="Kleer M."/>
            <person name="Bui-Marinos M.P."/>
            <person name="Ying S."/>
            <person name="Corcoran J.A."/>
            <person name="Khaperskyy D.A."/>
        </authorList>
    </citation>
    <scope>FUNCTION</scope>
</reference>
<organismHost>
    <name type="scientific">Homo sapiens</name>
    <name type="common">Human</name>
    <dbReference type="NCBI Taxonomy" id="9606"/>
</organismHost>
<comment type="function">
    <text evidence="2 7">Packages the positive strand viral genome RNA into a helical ribonucleocapsid (RNP) and plays a fundamental role during virion assembly through its interactions with the viral genome and membrane protein M. Plays an important role in enhancing the efficiency of subgenomic viral RNA transcription as well as viral replication. Attenuates the stress granules formation by reducing host G3BP1 access to host mRNAs under stress conditions (PubMed:36534661).</text>
</comment>
<comment type="subunit">
    <text evidence="2">Homooligomer. Both monomeric and oligomeric forms interact with RNA. Interacts with protein M. Interacts with NSP3; this interaction serves to tether the genome to the newly translated replicase-transcriptase complex at a very early stage of infection.</text>
</comment>
<comment type="subcellular location">
    <subcellularLocation>
        <location evidence="2">Virion</location>
    </subcellularLocation>
    <subcellularLocation>
        <location evidence="2">Host endoplasmic reticulum-Golgi intermediate compartment</location>
    </subcellularLocation>
    <subcellularLocation>
        <location evidence="2">Host Golgi apparatus</location>
    </subcellularLocation>
    <text evidence="2">Located inside the virion, complexed with the viral RNA. Probably associates with ER-derived membranes where it participates in viral RNA synthesis and virus budding.</text>
</comment>
<comment type="PTM">
    <text evidence="2">ADP-ribosylated. The ADP-ribosylation is retained in the virion during infection.</text>
</comment>
<comment type="PTM">
    <text evidence="2">Phosphorylated on serine and threonine residues.</text>
</comment>
<comment type="PTM">
    <text evidence="6">Proteolytically cleaved by host CASP6. The cleavage leads to two fragments and facilitates viral replication by inhibiting host IFN signaling. The two fragments may interact with IRF3 inhibiting its nuclear translocation after activation and reduce the expression of IFNB and IFN-stimulated genes.</text>
</comment>
<comment type="similarity">
    <text evidence="2">Belongs to the betacoronavirus nucleocapsid protein family.</text>
</comment>
<organism>
    <name type="scientific">Human coronavirus OC43</name>
    <name type="common">HCoV-OC43</name>
    <dbReference type="NCBI Taxonomy" id="31631"/>
    <lineage>
        <taxon>Viruses</taxon>
        <taxon>Riboviria</taxon>
        <taxon>Orthornavirae</taxon>
        <taxon>Pisuviricota</taxon>
        <taxon>Pisoniviricetes</taxon>
        <taxon>Nidovirales</taxon>
        <taxon>Cornidovirineae</taxon>
        <taxon>Coronaviridae</taxon>
        <taxon>Orthocoronavirinae</taxon>
        <taxon>Betacoronavirus</taxon>
        <taxon>Embecovirus</taxon>
        <taxon>Betacoronavirus 1</taxon>
    </lineage>
</organism>
<keyword id="KW-0002">3D-structure</keyword>
<keyword id="KW-0013">ADP-ribosylation</keyword>
<keyword id="KW-1040">Host Golgi apparatus</keyword>
<keyword id="KW-0597">Phosphoprotein</keyword>
<keyword id="KW-1185">Reference proteome</keyword>
<keyword id="KW-0687">Ribonucleoprotein</keyword>
<keyword id="KW-0694">RNA-binding</keyword>
<keyword id="KW-0804">Transcription</keyword>
<keyword id="KW-0805">Transcription regulation</keyword>
<keyword id="KW-0543">Viral nucleoprotein</keyword>
<keyword id="KW-0946">Virion</keyword>
<gene>
    <name evidence="2" type="primary">N</name>
    <name type="ORF">7a</name>
</gene>
<protein>
    <recommendedName>
        <fullName evidence="2">Nucleoprotein</fullName>
    </recommendedName>
    <alternativeName>
        <fullName evidence="2">Nucleocapsid protein</fullName>
        <shortName evidence="2">NC</shortName>
        <shortName evidence="2">Protein N</shortName>
    </alternativeName>
</protein>
<evidence type="ECO:0000250" key="1">
    <source>
        <dbReference type="UniProtKB" id="P0DTC9"/>
    </source>
</evidence>
<evidence type="ECO:0000255" key="2">
    <source>
        <dbReference type="HAMAP-Rule" id="MF_04096"/>
    </source>
</evidence>
<evidence type="ECO:0000255" key="3">
    <source>
        <dbReference type="PROSITE-ProRule" id="PRU01276"/>
    </source>
</evidence>
<evidence type="ECO:0000255" key="4">
    <source>
        <dbReference type="PROSITE-ProRule" id="PRU01277"/>
    </source>
</evidence>
<evidence type="ECO:0000256" key="5">
    <source>
        <dbReference type="SAM" id="MobiDB-lite"/>
    </source>
</evidence>
<evidence type="ECO:0000269" key="6">
    <source>
    </source>
</evidence>
<evidence type="ECO:0000269" key="7">
    <source>
    </source>
</evidence>
<evidence type="ECO:0007829" key="8">
    <source>
        <dbReference type="PDB" id="4LM7"/>
    </source>
</evidence>
<evidence type="ECO:0007829" key="9">
    <source>
        <dbReference type="PDB" id="4LM9"/>
    </source>
</evidence>
<feature type="chain" id="PRO_0000106001" description="Nucleoprotein">
    <location>
        <begin position="1"/>
        <end position="448"/>
    </location>
</feature>
<feature type="domain" description="CoV N NTD" evidence="3">
    <location>
        <begin position="61"/>
        <end position="190"/>
    </location>
</feature>
<feature type="domain" description="CoV N CTD" evidence="4">
    <location>
        <begin position="259"/>
        <end position="384"/>
    </location>
</feature>
<feature type="region of interest" description="Disordered" evidence="5">
    <location>
        <begin position="1"/>
        <end position="55"/>
    </location>
</feature>
<feature type="region of interest" description="RNA-binding" evidence="2">
    <location>
        <begin position="52"/>
        <end position="194"/>
    </location>
</feature>
<feature type="region of interest" description="Disordered" evidence="5">
    <location>
        <begin position="158"/>
        <end position="231"/>
    </location>
</feature>
<feature type="region of interest" description="Dimerization" evidence="2">
    <location>
        <begin position="266"/>
        <end position="384"/>
    </location>
</feature>
<feature type="region of interest" description="Disordered" evidence="5">
    <location>
        <begin position="266"/>
        <end position="293"/>
    </location>
</feature>
<feature type="region of interest" description="Disordered" evidence="5">
    <location>
        <begin position="385"/>
        <end position="448"/>
    </location>
</feature>
<feature type="compositionally biased region" description="Low complexity" evidence="5">
    <location>
        <begin position="9"/>
        <end position="22"/>
    </location>
</feature>
<feature type="compositionally biased region" description="Polar residues" evidence="5">
    <location>
        <begin position="29"/>
        <end position="38"/>
    </location>
</feature>
<feature type="compositionally biased region" description="Polar residues" evidence="5">
    <location>
        <begin position="45"/>
        <end position="55"/>
    </location>
</feature>
<feature type="compositionally biased region" description="Low complexity" evidence="5">
    <location>
        <begin position="193"/>
        <end position="223"/>
    </location>
</feature>
<feature type="compositionally biased region" description="Basic residues" evidence="5">
    <location>
        <begin position="266"/>
        <end position="276"/>
    </location>
</feature>
<feature type="compositionally biased region" description="Basic and acidic residues" evidence="5">
    <location>
        <begin position="422"/>
        <end position="439"/>
    </location>
</feature>
<feature type="binding site" evidence="1">
    <location>
        <position position="106"/>
    </location>
    <ligand>
        <name>RNA</name>
        <dbReference type="ChEBI" id="CHEBI:33697"/>
    </ligand>
</feature>
<feature type="binding site" evidence="1">
    <location>
        <position position="122"/>
    </location>
    <ligand>
        <name>RNA</name>
        <dbReference type="ChEBI" id="CHEBI:33697"/>
    </ligand>
</feature>
<feature type="binding site" evidence="1">
    <location>
        <position position="164"/>
    </location>
    <ligand>
        <name>RNA</name>
        <dbReference type="ChEBI" id="CHEBI:33697"/>
    </ligand>
</feature>
<feature type="modified residue" description="Phosphoserine; by host" evidence="2">
    <location>
        <position position="167"/>
    </location>
</feature>
<feature type="modified residue" description="Phosphothreonine; by host" evidence="2">
    <location>
        <position position="174"/>
    </location>
</feature>
<feature type="modified residue" description="Phosphoserine; by host" evidence="2">
    <location>
        <position position="191"/>
    </location>
</feature>
<feature type="modified residue" description="Phosphoserine; by host" evidence="2">
    <location>
        <position position="390"/>
    </location>
</feature>
<feature type="modified residue" description="Phosphoserine; by host" evidence="2">
    <location>
        <position position="423"/>
    </location>
</feature>
<feature type="modified residue" description="Phosphothreonine; by host" evidence="2">
    <location>
        <position position="427"/>
    </location>
</feature>
<feature type="sequence variant" description="In strain: Isolate ATCC VR-759 and Isolate clinical OC43-Paris.">
    <original>V</original>
    <variation>F</variation>
    <location>
        <position position="33"/>
    </location>
</feature>
<feature type="sequence variant" description="In strain: Isolate ATCC VR-759 and Isolate clinical OC43-Paris.">
    <original>P</original>
    <variation>V</variation>
    <location>
        <position position="86"/>
    </location>
</feature>
<feature type="sequence variant" description="In strain: Isolate ATCC VR-759 and Isolate clinical OC43-Paris.">
    <original>G</original>
    <variation>R</variation>
    <location>
        <position position="107"/>
    </location>
</feature>
<feature type="strand" evidence="9">
    <location>
        <begin position="69"/>
        <end position="71"/>
    </location>
</feature>
<feature type="helix" evidence="9">
    <location>
        <begin position="94"/>
        <end position="96"/>
    </location>
</feature>
<feature type="strand" evidence="9">
    <location>
        <begin position="98"/>
        <end position="104"/>
    </location>
</feature>
<feature type="strand" evidence="9">
    <location>
        <begin position="122"/>
        <end position="127"/>
    </location>
</feature>
<feature type="turn" evidence="9">
    <location>
        <begin position="132"/>
        <end position="135"/>
    </location>
</feature>
<feature type="strand" evidence="9">
    <location>
        <begin position="145"/>
        <end position="149"/>
    </location>
</feature>
<feature type="turn" evidence="8">
    <location>
        <begin position="166"/>
        <end position="168"/>
    </location>
</feature>
<feature type="strand" evidence="9">
    <location>
        <begin position="186"/>
        <end position="188"/>
    </location>
</feature>
<dbReference type="EMBL" id="AY585228">
    <property type="protein sequence ID" value="AAT84358.1"/>
    <property type="molecule type" value="Genomic_RNA"/>
</dbReference>
<dbReference type="EMBL" id="AY391777">
    <property type="protein sequence ID" value="AAR01019.1"/>
    <property type="molecule type" value="Genomic_RNA"/>
</dbReference>
<dbReference type="PIR" id="A60003">
    <property type="entry name" value="A60003"/>
</dbReference>
<dbReference type="PDB" id="4J3K">
    <property type="method" value="X-ray"/>
    <property type="resolution" value="2.00 A"/>
    <property type="chains" value="A=58-191"/>
</dbReference>
<dbReference type="PDB" id="4KXJ">
    <property type="method" value="X-ray"/>
    <property type="resolution" value="2.65 A"/>
    <property type="chains" value="A=58-191"/>
</dbReference>
<dbReference type="PDB" id="4LI4">
    <property type="method" value="X-ray"/>
    <property type="resolution" value="1.71 A"/>
    <property type="chains" value="A=58-191"/>
</dbReference>
<dbReference type="PDB" id="4LM7">
    <property type="method" value="X-ray"/>
    <property type="resolution" value="1.72 A"/>
    <property type="chains" value="A=58-191"/>
</dbReference>
<dbReference type="PDB" id="4LM9">
    <property type="method" value="X-ray"/>
    <property type="resolution" value="1.60 A"/>
    <property type="chains" value="A=58-190"/>
</dbReference>
<dbReference type="PDB" id="4LMC">
    <property type="method" value="X-ray"/>
    <property type="resolution" value="1.74 A"/>
    <property type="chains" value="A=58-190"/>
</dbReference>
<dbReference type="PDB" id="4LMT">
    <property type="method" value="X-ray"/>
    <property type="resolution" value="1.71 A"/>
    <property type="chains" value="A=58-191"/>
</dbReference>
<dbReference type="PDBsum" id="4J3K"/>
<dbReference type="PDBsum" id="4KXJ"/>
<dbReference type="PDBsum" id="4LI4"/>
<dbReference type="PDBsum" id="4LM7"/>
<dbReference type="PDBsum" id="4LM9"/>
<dbReference type="PDBsum" id="4LMC"/>
<dbReference type="PDBsum" id="4LMT"/>
<dbReference type="SMR" id="P33469"/>
<dbReference type="IntAct" id="P33469">
    <property type="interactions" value="231"/>
</dbReference>
<dbReference type="ChEMBL" id="CHEMBL3232681"/>
<dbReference type="EvolutionaryTrace" id="P33469"/>
<dbReference type="Proteomes" id="UP000007552">
    <property type="component" value="Genome"/>
</dbReference>
<dbReference type="Proteomes" id="UP000180344">
    <property type="component" value="Genome"/>
</dbReference>
<dbReference type="GO" id="GO:0044172">
    <property type="term" value="C:host cell endoplasmic reticulum-Golgi intermediate compartment"/>
    <property type="evidence" value="ECO:0007669"/>
    <property type="project" value="UniProtKB-SubCell"/>
</dbReference>
<dbReference type="GO" id="GO:0044177">
    <property type="term" value="C:host cell Golgi apparatus"/>
    <property type="evidence" value="ECO:0007669"/>
    <property type="project" value="UniProtKB-SubCell"/>
</dbReference>
<dbReference type="GO" id="GO:1990904">
    <property type="term" value="C:ribonucleoprotein complex"/>
    <property type="evidence" value="ECO:0007669"/>
    <property type="project" value="UniProtKB-KW"/>
</dbReference>
<dbReference type="GO" id="GO:0019013">
    <property type="term" value="C:viral nucleocapsid"/>
    <property type="evidence" value="ECO:0007669"/>
    <property type="project" value="UniProtKB-UniRule"/>
</dbReference>
<dbReference type="GO" id="GO:0003723">
    <property type="term" value="F:RNA binding"/>
    <property type="evidence" value="ECO:0007669"/>
    <property type="project" value="UniProtKB-UniRule"/>
</dbReference>
<dbReference type="CDD" id="cd21595">
    <property type="entry name" value="CoV_N-CTD"/>
    <property type="match status" value="1"/>
</dbReference>
<dbReference type="CDD" id="cd21554">
    <property type="entry name" value="CoV_N-NTD"/>
    <property type="match status" value="1"/>
</dbReference>
<dbReference type="HAMAP" id="MF_04096">
    <property type="entry name" value="BETA_CORONA_NCAP"/>
    <property type="match status" value="1"/>
</dbReference>
<dbReference type="InterPro" id="IPR044344">
    <property type="entry name" value="N_prot_C_CoV"/>
</dbReference>
<dbReference type="InterPro" id="IPR044345">
    <property type="entry name" value="N_prot_N_CoV"/>
</dbReference>
<dbReference type="InterPro" id="IPR043505">
    <property type="entry name" value="NCAP_bCoV"/>
</dbReference>
<dbReference type="InterPro" id="IPR001218">
    <property type="entry name" value="Nucleocap_CoV"/>
</dbReference>
<dbReference type="InterPro" id="IPR037179">
    <property type="entry name" value="Nucleocapsid_C"/>
</dbReference>
<dbReference type="InterPro" id="IPR037195">
    <property type="entry name" value="Nucleocapsid_N"/>
</dbReference>
<dbReference type="Pfam" id="PF00937">
    <property type="entry name" value="CoV_nucleocap"/>
    <property type="match status" value="1"/>
</dbReference>
<dbReference type="PIRSF" id="PIRSF003888">
    <property type="entry name" value="Corona_nucleocap"/>
    <property type="match status" value="1"/>
</dbReference>
<dbReference type="SUPFAM" id="SSF110304">
    <property type="entry name" value="Coronavirus RNA-binding domain"/>
    <property type="match status" value="1"/>
</dbReference>
<dbReference type="SUPFAM" id="SSF103068">
    <property type="entry name" value="Nucleocapsid protein dimerization domain"/>
    <property type="match status" value="1"/>
</dbReference>
<dbReference type="PROSITE" id="PS51929">
    <property type="entry name" value="COV_N_CTD"/>
    <property type="match status" value="1"/>
</dbReference>
<dbReference type="PROSITE" id="PS51928">
    <property type="entry name" value="COV_N_NTD"/>
    <property type="match status" value="1"/>
</dbReference>
<proteinExistence type="evidence at protein level"/>
<accession>P33469</accession>
<accession>Q6TNF5</accession>
<sequence length="448" mass="49316">MSFTPGKQSSSRASSGNRSGNGILKWADQSDQVRNVQTRGRRAQPKQTATSQQPSGGNVVPYYSWFSGITQFQKGKEFEFVEGQGPPIAPGVPATEAKGYWYRHNRGSFKTADGNQRQLLPRWYFYYLGTGPHAKDQYGTDIDGVYWVASNQADVNTPADIVDRDPSSDEAIPTRFPPGTVLPQGYYIEGSGRSAPNSRSTSRTSSRASSAGSRSRANSGNRTPTSGVTPDMADQIASLVLAKLGKDATKPQQVTKHTAKEVRQKILNKPRQKRSPNKQCTVQQCFGKRGPNQNFGGGEMLKLGTSDPQFPILAELAPTAGAFFFGSRLELAKVQNLSGNPDEPQKDVYELRYNGAIRFDSTLSGFETIMKVLNENLNAYQQQDGMMNMSPKPQRQRGHKNGQGENDNISVAVPKSRVQQNKSRELTAEDISLLKKMDEPYTEDTSEI</sequence>
<name>NCAP_CVHOC</name>